<protein>
    <recommendedName>
        <fullName evidence="1">RNA pyrophosphohydrolase</fullName>
        <ecNumber evidence="1">3.6.1.-</ecNumber>
    </recommendedName>
    <alternativeName>
        <fullName evidence="1">(Di)nucleoside polyphosphate hydrolase</fullName>
    </alternativeName>
</protein>
<sequence length="216" mass="25263">MLDREGFRPNVGIILLNAHNEVFWGKRLREHSWQFPQGGIKYGETPMQAMYRELHEETGLLPEHVKIIGRTRDWLRYEVPDKFIKREVRGHYRGQKQIWFLLRMVGRDCDICLRATDHPEFDAWRWNEYWVPLDAVIEFKRDVYQLALTELSRFLRRPAQRTDKSRGPRAPRYPRVANGHAASEAPAAIDTSAVCSEVEPGANALDETPPRVSLRD</sequence>
<comment type="function">
    <text evidence="1">Accelerates the degradation of transcripts by removing pyrophosphate from the 5'-end of triphosphorylated RNA, leading to a more labile monophosphorylated state that can stimulate subsequent ribonuclease cleavage.</text>
</comment>
<comment type="cofactor">
    <cofactor evidence="1">
        <name>a divalent metal cation</name>
        <dbReference type="ChEBI" id="CHEBI:60240"/>
    </cofactor>
</comment>
<comment type="similarity">
    <text evidence="1">Belongs to the Nudix hydrolase family. RppH subfamily.</text>
</comment>
<gene>
    <name evidence="1" type="primary">rppH</name>
    <name evidence="1" type="synonym">nudH</name>
    <name type="ordered locus">BURPS1106A_3521</name>
</gene>
<accession>A3NZI7</accession>
<feature type="chain" id="PRO_1000021937" description="RNA pyrophosphohydrolase">
    <location>
        <begin position="1"/>
        <end position="216"/>
    </location>
</feature>
<feature type="domain" description="Nudix hydrolase" evidence="1">
    <location>
        <begin position="6"/>
        <end position="149"/>
    </location>
</feature>
<feature type="region of interest" description="Disordered" evidence="2">
    <location>
        <begin position="159"/>
        <end position="188"/>
    </location>
</feature>
<feature type="short sequence motif" description="Nudix box">
    <location>
        <begin position="38"/>
        <end position="59"/>
    </location>
</feature>
<evidence type="ECO:0000255" key="1">
    <source>
        <dbReference type="HAMAP-Rule" id="MF_00298"/>
    </source>
</evidence>
<evidence type="ECO:0000256" key="2">
    <source>
        <dbReference type="SAM" id="MobiDB-lite"/>
    </source>
</evidence>
<reference key="1">
    <citation type="journal article" date="2010" name="Genome Biol. Evol.">
        <title>Continuing evolution of Burkholderia mallei through genome reduction and large-scale rearrangements.</title>
        <authorList>
            <person name="Losada L."/>
            <person name="Ronning C.M."/>
            <person name="DeShazer D."/>
            <person name="Woods D."/>
            <person name="Fedorova N."/>
            <person name="Kim H.S."/>
            <person name="Shabalina S.A."/>
            <person name="Pearson T.R."/>
            <person name="Brinkac L."/>
            <person name="Tan P."/>
            <person name="Nandi T."/>
            <person name="Crabtree J."/>
            <person name="Badger J."/>
            <person name="Beckstrom-Sternberg S."/>
            <person name="Saqib M."/>
            <person name="Schutzer S.E."/>
            <person name="Keim P."/>
            <person name="Nierman W.C."/>
        </authorList>
    </citation>
    <scope>NUCLEOTIDE SEQUENCE [LARGE SCALE GENOMIC DNA]</scope>
    <source>
        <strain>1106a</strain>
    </source>
</reference>
<proteinExistence type="inferred from homology"/>
<organism>
    <name type="scientific">Burkholderia pseudomallei (strain 1106a)</name>
    <dbReference type="NCBI Taxonomy" id="357348"/>
    <lineage>
        <taxon>Bacteria</taxon>
        <taxon>Pseudomonadati</taxon>
        <taxon>Pseudomonadota</taxon>
        <taxon>Betaproteobacteria</taxon>
        <taxon>Burkholderiales</taxon>
        <taxon>Burkholderiaceae</taxon>
        <taxon>Burkholderia</taxon>
        <taxon>pseudomallei group</taxon>
    </lineage>
</organism>
<name>RPPH_BURP0</name>
<keyword id="KW-0378">Hydrolase</keyword>
<dbReference type="EC" id="3.6.1.-" evidence="1"/>
<dbReference type="EMBL" id="CP000572">
    <property type="protein sequence ID" value="ABN90061.1"/>
    <property type="molecule type" value="Genomic_DNA"/>
</dbReference>
<dbReference type="RefSeq" id="WP_004194263.1">
    <property type="nucleotide sequence ID" value="NC_009076.1"/>
</dbReference>
<dbReference type="SMR" id="A3NZI7"/>
<dbReference type="KEGG" id="bpl:BURPS1106A_3521"/>
<dbReference type="HOGENOM" id="CLU_087195_0_1_4"/>
<dbReference type="Proteomes" id="UP000006738">
    <property type="component" value="Chromosome I"/>
</dbReference>
<dbReference type="GO" id="GO:0016462">
    <property type="term" value="F:pyrophosphatase activity"/>
    <property type="evidence" value="ECO:0007669"/>
    <property type="project" value="UniProtKB-ARBA"/>
</dbReference>
<dbReference type="CDD" id="cd03671">
    <property type="entry name" value="NUDIX_Ap4A_hydrolase_plant_like"/>
    <property type="match status" value="1"/>
</dbReference>
<dbReference type="Gene3D" id="3.90.79.10">
    <property type="entry name" value="Nucleoside Triphosphate Pyrophosphohydrolase"/>
    <property type="match status" value="1"/>
</dbReference>
<dbReference type="HAMAP" id="MF_00298">
    <property type="entry name" value="Nudix_RppH"/>
    <property type="match status" value="1"/>
</dbReference>
<dbReference type="InterPro" id="IPR020476">
    <property type="entry name" value="Nudix_hydrolase"/>
</dbReference>
<dbReference type="InterPro" id="IPR015797">
    <property type="entry name" value="NUDIX_hydrolase-like_dom_sf"/>
</dbReference>
<dbReference type="InterPro" id="IPR020084">
    <property type="entry name" value="NUDIX_hydrolase_CS"/>
</dbReference>
<dbReference type="InterPro" id="IPR000086">
    <property type="entry name" value="NUDIX_hydrolase_dom"/>
</dbReference>
<dbReference type="InterPro" id="IPR022927">
    <property type="entry name" value="RppH"/>
</dbReference>
<dbReference type="NCBIfam" id="NF001935">
    <property type="entry name" value="PRK00714.1-2"/>
    <property type="match status" value="1"/>
</dbReference>
<dbReference type="NCBIfam" id="NF001937">
    <property type="entry name" value="PRK00714.1-4"/>
    <property type="match status" value="1"/>
</dbReference>
<dbReference type="NCBIfam" id="NF001938">
    <property type="entry name" value="PRK00714.1-5"/>
    <property type="match status" value="1"/>
</dbReference>
<dbReference type="PANTHER" id="PTHR43736">
    <property type="entry name" value="ADP-RIBOSE PYROPHOSPHATASE"/>
    <property type="match status" value="1"/>
</dbReference>
<dbReference type="PANTHER" id="PTHR43736:SF1">
    <property type="entry name" value="DIHYDRONEOPTERIN TRIPHOSPHATE DIPHOSPHATASE"/>
    <property type="match status" value="1"/>
</dbReference>
<dbReference type="Pfam" id="PF00293">
    <property type="entry name" value="NUDIX"/>
    <property type="match status" value="1"/>
</dbReference>
<dbReference type="PRINTS" id="PR00502">
    <property type="entry name" value="NUDIXFAMILY"/>
</dbReference>
<dbReference type="SUPFAM" id="SSF55811">
    <property type="entry name" value="Nudix"/>
    <property type="match status" value="1"/>
</dbReference>
<dbReference type="PROSITE" id="PS51462">
    <property type="entry name" value="NUDIX"/>
    <property type="match status" value="1"/>
</dbReference>
<dbReference type="PROSITE" id="PS00893">
    <property type="entry name" value="NUDIX_BOX"/>
    <property type="match status" value="1"/>
</dbReference>